<feature type="chain" id="PRO_1000195547" description="Large ribosomal subunit protein uL10">
    <location>
        <begin position="1"/>
        <end position="165"/>
    </location>
</feature>
<feature type="modified residue" description="N6-acetyllysine" evidence="1">
    <location>
        <position position="37"/>
    </location>
</feature>
<feature type="modified residue" description="N6-acetyllysine" evidence="1">
    <location>
        <position position="105"/>
    </location>
</feature>
<dbReference type="EMBL" id="CU928162">
    <property type="protein sequence ID" value="CAR10656.1"/>
    <property type="molecule type" value="Genomic_DNA"/>
</dbReference>
<dbReference type="RefSeq" id="WP_001207201.1">
    <property type="nucleotide sequence ID" value="NC_011745.1"/>
</dbReference>
<dbReference type="SMR" id="B7MR71"/>
<dbReference type="GeneID" id="93777909"/>
<dbReference type="KEGG" id="ecq:ECED1_4692"/>
<dbReference type="HOGENOM" id="CLU_092227_0_2_6"/>
<dbReference type="Proteomes" id="UP000000748">
    <property type="component" value="Chromosome"/>
</dbReference>
<dbReference type="GO" id="GO:0015934">
    <property type="term" value="C:large ribosomal subunit"/>
    <property type="evidence" value="ECO:0007669"/>
    <property type="project" value="InterPro"/>
</dbReference>
<dbReference type="GO" id="GO:0070180">
    <property type="term" value="F:large ribosomal subunit rRNA binding"/>
    <property type="evidence" value="ECO:0007669"/>
    <property type="project" value="UniProtKB-UniRule"/>
</dbReference>
<dbReference type="GO" id="GO:0003735">
    <property type="term" value="F:structural constituent of ribosome"/>
    <property type="evidence" value="ECO:0007669"/>
    <property type="project" value="InterPro"/>
</dbReference>
<dbReference type="GO" id="GO:0006412">
    <property type="term" value="P:translation"/>
    <property type="evidence" value="ECO:0007669"/>
    <property type="project" value="UniProtKB-UniRule"/>
</dbReference>
<dbReference type="CDD" id="cd05797">
    <property type="entry name" value="Ribosomal_L10"/>
    <property type="match status" value="1"/>
</dbReference>
<dbReference type="FunFam" id="3.30.70.1730:FF:000001">
    <property type="entry name" value="50S ribosomal protein L10"/>
    <property type="match status" value="1"/>
</dbReference>
<dbReference type="Gene3D" id="3.30.70.1730">
    <property type="match status" value="1"/>
</dbReference>
<dbReference type="Gene3D" id="6.10.250.2350">
    <property type="match status" value="1"/>
</dbReference>
<dbReference type="HAMAP" id="MF_00362">
    <property type="entry name" value="Ribosomal_uL10"/>
    <property type="match status" value="1"/>
</dbReference>
<dbReference type="InterPro" id="IPR001790">
    <property type="entry name" value="Ribosomal_uL10"/>
</dbReference>
<dbReference type="InterPro" id="IPR043141">
    <property type="entry name" value="Ribosomal_uL10-like_sf"/>
</dbReference>
<dbReference type="InterPro" id="IPR022973">
    <property type="entry name" value="Ribosomal_uL10_bac"/>
</dbReference>
<dbReference type="InterPro" id="IPR047865">
    <property type="entry name" value="Ribosomal_uL10_bac_type"/>
</dbReference>
<dbReference type="InterPro" id="IPR002363">
    <property type="entry name" value="Ribosomal_uL10_CS_bac"/>
</dbReference>
<dbReference type="NCBIfam" id="NF000955">
    <property type="entry name" value="PRK00099.1-1"/>
    <property type="match status" value="1"/>
</dbReference>
<dbReference type="PANTHER" id="PTHR11560">
    <property type="entry name" value="39S RIBOSOMAL PROTEIN L10, MITOCHONDRIAL"/>
    <property type="match status" value="1"/>
</dbReference>
<dbReference type="Pfam" id="PF00466">
    <property type="entry name" value="Ribosomal_L10"/>
    <property type="match status" value="1"/>
</dbReference>
<dbReference type="SUPFAM" id="SSF160369">
    <property type="entry name" value="Ribosomal protein L10-like"/>
    <property type="match status" value="1"/>
</dbReference>
<dbReference type="PROSITE" id="PS01109">
    <property type="entry name" value="RIBOSOMAL_L10"/>
    <property type="match status" value="1"/>
</dbReference>
<evidence type="ECO:0000255" key="1">
    <source>
        <dbReference type="HAMAP-Rule" id="MF_00362"/>
    </source>
</evidence>
<evidence type="ECO:0000305" key="2"/>
<sequence>MALNLQDKQAIVAEVSEVAKGALSAVVADSRGVTVDKMTELRKAGREAGVYMRVVRNTLLRRAVEGTPFECLKDAFVGPTLIAYSMEHPGAAARLFKEFAKANAKFEVKAAAFEGELIPASQIDRLATLPTYEEAIARLMATMKEASAGKLVRTLAAVRDAKEAA</sequence>
<reference key="1">
    <citation type="journal article" date="2009" name="PLoS Genet.">
        <title>Organised genome dynamics in the Escherichia coli species results in highly diverse adaptive paths.</title>
        <authorList>
            <person name="Touchon M."/>
            <person name="Hoede C."/>
            <person name="Tenaillon O."/>
            <person name="Barbe V."/>
            <person name="Baeriswyl S."/>
            <person name="Bidet P."/>
            <person name="Bingen E."/>
            <person name="Bonacorsi S."/>
            <person name="Bouchier C."/>
            <person name="Bouvet O."/>
            <person name="Calteau A."/>
            <person name="Chiapello H."/>
            <person name="Clermont O."/>
            <person name="Cruveiller S."/>
            <person name="Danchin A."/>
            <person name="Diard M."/>
            <person name="Dossat C."/>
            <person name="Karoui M.E."/>
            <person name="Frapy E."/>
            <person name="Garry L."/>
            <person name="Ghigo J.M."/>
            <person name="Gilles A.M."/>
            <person name="Johnson J."/>
            <person name="Le Bouguenec C."/>
            <person name="Lescat M."/>
            <person name="Mangenot S."/>
            <person name="Martinez-Jehanne V."/>
            <person name="Matic I."/>
            <person name="Nassif X."/>
            <person name="Oztas S."/>
            <person name="Petit M.A."/>
            <person name="Pichon C."/>
            <person name="Rouy Z."/>
            <person name="Ruf C.S."/>
            <person name="Schneider D."/>
            <person name="Tourret J."/>
            <person name="Vacherie B."/>
            <person name="Vallenet D."/>
            <person name="Medigue C."/>
            <person name="Rocha E.P.C."/>
            <person name="Denamur E."/>
        </authorList>
    </citation>
    <scope>NUCLEOTIDE SEQUENCE [LARGE SCALE GENOMIC DNA]</scope>
    <source>
        <strain>ED1a</strain>
    </source>
</reference>
<keyword id="KW-0007">Acetylation</keyword>
<keyword id="KW-0687">Ribonucleoprotein</keyword>
<keyword id="KW-0689">Ribosomal protein</keyword>
<keyword id="KW-0694">RNA-binding</keyword>
<keyword id="KW-0699">rRNA-binding</keyword>
<organism>
    <name type="scientific">Escherichia coli O81 (strain ED1a)</name>
    <dbReference type="NCBI Taxonomy" id="585397"/>
    <lineage>
        <taxon>Bacteria</taxon>
        <taxon>Pseudomonadati</taxon>
        <taxon>Pseudomonadota</taxon>
        <taxon>Gammaproteobacteria</taxon>
        <taxon>Enterobacterales</taxon>
        <taxon>Enterobacteriaceae</taxon>
        <taxon>Escherichia</taxon>
    </lineage>
</organism>
<comment type="function">
    <text evidence="1">Forms part of the ribosomal stalk, playing a central role in the interaction of the ribosome with GTP-bound translation factors.</text>
</comment>
<comment type="subunit">
    <text evidence="1">Part of the ribosomal stalk of the 50S ribosomal subunit. The N-terminus interacts with L11 and the large rRNA to form the base of the stalk. The C-terminus forms an elongated spine to which L12 dimers bind in a sequential fashion forming a multimeric L10(L12)X complex.</text>
</comment>
<comment type="similarity">
    <text evidence="1">Belongs to the universal ribosomal protein uL10 family.</text>
</comment>
<proteinExistence type="inferred from homology"/>
<accession>B7MR71</accession>
<protein>
    <recommendedName>
        <fullName evidence="1">Large ribosomal subunit protein uL10</fullName>
    </recommendedName>
    <alternativeName>
        <fullName evidence="2">50S ribosomal protein L10</fullName>
    </alternativeName>
</protein>
<gene>
    <name evidence="1" type="primary">rplJ</name>
    <name type="ordered locus">ECED1_4692</name>
</gene>
<name>RL10_ECO81</name>